<keyword id="KW-0150">Chloroplast</keyword>
<keyword id="KW-0413">Isomerase</keyword>
<keyword id="KW-0460">Magnesium</keyword>
<keyword id="KW-0479">Metal-binding</keyword>
<keyword id="KW-0934">Plastid</keyword>
<keyword id="KW-0809">Transit peptide</keyword>
<gene>
    <name evidence="6" type="primary">TPS10</name>
</gene>
<dbReference type="EC" id="5.5.1.28" evidence="5"/>
<dbReference type="EMBL" id="KU948708">
    <property type="protein sequence ID" value="ANO43021.1"/>
    <property type="molecule type" value="mRNA"/>
</dbReference>
<dbReference type="SMR" id="A0A1C7AAN2"/>
<dbReference type="KEGG" id="ag:ANO43021"/>
<dbReference type="GO" id="GO:0009507">
    <property type="term" value="C:chloroplast"/>
    <property type="evidence" value="ECO:0007669"/>
    <property type="project" value="UniProtKB-SubCell"/>
</dbReference>
<dbReference type="GO" id="GO:0016853">
    <property type="term" value="F:isomerase activity"/>
    <property type="evidence" value="ECO:0007669"/>
    <property type="project" value="UniProtKB-KW"/>
</dbReference>
<dbReference type="GO" id="GO:0000287">
    <property type="term" value="F:magnesium ion binding"/>
    <property type="evidence" value="ECO:0007669"/>
    <property type="project" value="InterPro"/>
</dbReference>
<dbReference type="GO" id="GO:0010333">
    <property type="term" value="F:terpene synthase activity"/>
    <property type="evidence" value="ECO:0000314"/>
    <property type="project" value="UniProtKB"/>
</dbReference>
<dbReference type="GO" id="GO:0016102">
    <property type="term" value="P:diterpenoid biosynthetic process"/>
    <property type="evidence" value="ECO:0000314"/>
    <property type="project" value="UniProtKB"/>
</dbReference>
<dbReference type="GO" id="GO:0009686">
    <property type="term" value="P:gibberellin biosynthetic process"/>
    <property type="evidence" value="ECO:0007669"/>
    <property type="project" value="TreeGrafter"/>
</dbReference>
<dbReference type="FunFam" id="1.50.10.160:FF:000001">
    <property type="entry name" value="Ent-copalyl diphosphate synthase"/>
    <property type="match status" value="1"/>
</dbReference>
<dbReference type="FunFam" id="1.50.10.130:FF:000002">
    <property type="entry name" value="Ent-copalyl diphosphate synthase, chloroplastic"/>
    <property type="match status" value="1"/>
</dbReference>
<dbReference type="Gene3D" id="1.50.10.160">
    <property type="match status" value="1"/>
</dbReference>
<dbReference type="Gene3D" id="1.10.600.10">
    <property type="entry name" value="Farnesyl Diphosphate Synthase"/>
    <property type="match status" value="1"/>
</dbReference>
<dbReference type="Gene3D" id="1.50.10.130">
    <property type="entry name" value="Terpene synthase, N-terminal domain"/>
    <property type="match status" value="1"/>
</dbReference>
<dbReference type="InterPro" id="IPR008949">
    <property type="entry name" value="Isoprenoid_synthase_dom_sf"/>
</dbReference>
<dbReference type="InterPro" id="IPR001906">
    <property type="entry name" value="Terpene_synth_N"/>
</dbReference>
<dbReference type="InterPro" id="IPR036965">
    <property type="entry name" value="Terpene_synth_N_sf"/>
</dbReference>
<dbReference type="InterPro" id="IPR050148">
    <property type="entry name" value="Terpene_synthase-like"/>
</dbReference>
<dbReference type="InterPro" id="IPR005630">
    <property type="entry name" value="Terpene_synthase_metal-bd"/>
</dbReference>
<dbReference type="InterPro" id="IPR008930">
    <property type="entry name" value="Terpenoid_cyclase/PrenylTrfase"/>
</dbReference>
<dbReference type="PANTHER" id="PTHR31739">
    <property type="entry name" value="ENT-COPALYL DIPHOSPHATE SYNTHASE, CHLOROPLASTIC"/>
    <property type="match status" value="1"/>
</dbReference>
<dbReference type="PANTHER" id="PTHR31739:SF4">
    <property type="entry name" value="ENT-COPALYL DIPHOSPHATE SYNTHASE, CHLOROPLASTIC"/>
    <property type="match status" value="1"/>
</dbReference>
<dbReference type="Pfam" id="PF01397">
    <property type="entry name" value="Terpene_synth"/>
    <property type="match status" value="1"/>
</dbReference>
<dbReference type="Pfam" id="PF03936">
    <property type="entry name" value="Terpene_synth_C"/>
    <property type="match status" value="1"/>
</dbReference>
<dbReference type="SFLD" id="SFLDG01014">
    <property type="entry name" value="Terpene_Cyclase_Like_1_N-term"/>
    <property type="match status" value="1"/>
</dbReference>
<dbReference type="SFLD" id="SFLDG01605">
    <property type="entry name" value="Terpene_Cyclase_Like_1_N-term"/>
    <property type="match status" value="1"/>
</dbReference>
<dbReference type="SUPFAM" id="SSF48239">
    <property type="entry name" value="Terpenoid cyclases/Protein prenyltransferases"/>
    <property type="match status" value="2"/>
</dbReference>
<dbReference type="SUPFAM" id="SSF48576">
    <property type="entry name" value="Terpenoid synthases"/>
    <property type="match status" value="1"/>
</dbReference>
<comment type="function">
    <text evidence="5">Diterpene synthase that catalyzes the formation of (-)-kolavenyl diphosphate from geranylgeranyl diphosphate (GGPP).</text>
</comment>
<comment type="catalytic activity">
    <reaction evidence="5">
        <text>(2E,6E,10E)-geranylgeranyl diphosphate = (-)-kolavenyl diphosphate</text>
        <dbReference type="Rhea" id="RHEA:54684"/>
        <dbReference type="ChEBI" id="CHEBI:58756"/>
        <dbReference type="ChEBI" id="CHEBI:138310"/>
        <dbReference type="EC" id="5.5.1.28"/>
    </reaction>
    <physiologicalReaction direction="left-to-right" evidence="5">
        <dbReference type="Rhea" id="RHEA:54685"/>
    </physiologicalReaction>
</comment>
<comment type="cofactor">
    <cofactor evidence="1">
        <name>Mg(2+)</name>
        <dbReference type="ChEBI" id="CHEBI:18420"/>
    </cofactor>
</comment>
<comment type="activity regulation">
    <text evidence="1">Inhibited by high concentrations of magnesium.</text>
</comment>
<comment type="subcellular location">
    <subcellularLocation>
        <location evidence="4">Plastid</location>
        <location evidence="4">Chloroplast</location>
    </subcellularLocation>
</comment>
<comment type="domain">
    <text evidence="8">The Asp-Xaa-Asp-Asp (DXDD) motif is important for the catalytic activity through binding to Mg(2+).</text>
</comment>
<comment type="similarity">
    <text evidence="7">Belongs to the terpene synthase family. Tpsc subfamily.</text>
</comment>
<evidence type="ECO:0000250" key="1">
    <source>
        <dbReference type="UniProtKB" id="A0A1S5RW73"/>
    </source>
</evidence>
<evidence type="ECO:0000250" key="2">
    <source>
        <dbReference type="UniProtKB" id="C7BKP9"/>
    </source>
</evidence>
<evidence type="ECO:0000250" key="3">
    <source>
        <dbReference type="UniProtKB" id="Q38802"/>
    </source>
</evidence>
<evidence type="ECO:0000255" key="4"/>
<evidence type="ECO:0000269" key="5">
    <source>
    </source>
</evidence>
<evidence type="ECO:0000303" key="6">
    <source>
    </source>
</evidence>
<evidence type="ECO:0000305" key="7"/>
<evidence type="ECO:0000305" key="8">
    <source>
    </source>
</evidence>
<sequence>MFMSSSSSSHARRPQLSSFSYLHPPLPFPGLSFSSTRDKRVNFDSTRIISIAKSKPARTTPEYSDVLQTGLPLIVEDDIQEQEEPLEVSLENQIRQGVDIVKSMLGSIEDGEISISAYDTAWVALVENIHHPGSPQFPSTLQWIANNQLPDSSWGDPDMFLTHDRLINTLACVIALKKWNIHPRKCKRGLSFVKENISKLAKEDEEHMLIGFEIAFPSLLEMAKKLGIEIPDDCPAMQDIYTKKDLKLTRIPRDIMHNVPTTLLYSLEGLPSLDWEKLVKLQCQDGSFLFSPSSTACALMHTKDGNCFSYLNNLVHKFNGGVPNVYPVDLFEHIWSVDRLLRLGISRFFRPEIKECLEYVHRYWTKDGICWARNSNVQDIDDTSMGFRLLRLHGYEVSPDVFKQFKKGNEFVCVVGQSDQAITGIYNLYRASQLMFPKETILHGAKEFAGNFLRKKRTANELLDKWIITKDLPGEVGFALDVPWYACLPRVETRLYIEQYGGQDDVWIGKTLYRMPYVNNNVYLELAKLDYNNCQSLHRIEWDNIQKWYEEYNVGGFGVSKRGLLKTYFVATASIFEPERSVERLAWAKTAILVETIRSYFGNSREERIAFPNEFQKAKTRGYINGRRLDGKQATKGLIEMVFATLNHLSQDALVVHGQDITPHLYQSWEKWVLTWQEGGDRGEGEAELLVQTINLMAGHTHSQEEELLYERLFKLTNTVCHQLGHYHHLNKDKQPQQVQDNGGYNNSNPESISKLQIESDMRELVQLVLNSSDGMDSNIKQTFLTVTKSFYYTAFTHPGTVNYHIAKVLFERVV</sequence>
<feature type="transit peptide" description="Chloroplast" evidence="4">
    <location>
        <begin position="1"/>
        <end position="50"/>
    </location>
</feature>
<feature type="chain" id="PRO_0000447689" description="(-)-kolavenyl diphosphate synthase TPS10, chloroplastic">
    <location>
        <begin position="51"/>
        <end position="815"/>
    </location>
</feature>
<feature type="short sequence motif" description="DXDD motif" evidence="8">
    <location>
        <begin position="379"/>
        <end position="382"/>
    </location>
</feature>
<feature type="binding site" evidence="3">
    <location>
        <position position="247"/>
    </location>
    <ligand>
        <name>substrate</name>
    </ligand>
</feature>
<feature type="binding site" evidence="2">
    <location>
        <position position="379"/>
    </location>
    <ligand>
        <name>Mg(2+)</name>
        <dbReference type="ChEBI" id="CHEBI:18420"/>
    </ligand>
</feature>
<feature type="binding site" evidence="2">
    <location>
        <position position="381"/>
    </location>
    <ligand>
        <name>Mg(2+)</name>
        <dbReference type="ChEBI" id="CHEBI:18420"/>
    </ligand>
</feature>
<feature type="binding site" evidence="3">
    <location>
        <position position="465"/>
    </location>
    <ligand>
        <name>substrate</name>
    </ligand>
</feature>
<protein>
    <recommendedName>
        <fullName evidence="7">(-)-kolavenyl diphosphate synthase TPS10, chloroplastic</fullName>
        <ecNumber evidence="5">5.5.1.28</ecNumber>
    </recommendedName>
    <alternativeName>
        <fullName evidence="6">Terpene synthase 10</fullName>
        <shortName evidence="6">TwTPS10</shortName>
    </alternativeName>
</protein>
<name>TPS10_TRIWF</name>
<accession>A0A1C7AAN2</accession>
<reference key="1">
    <citation type="journal article" date="2017" name="Plant J.">
        <title>The terpene synthase gene family in Tripterygium wilfordii harbors a labdane-type diterpene synthase among the monoterpene synthase TPS-b subfamily.</title>
        <authorList>
            <person name="Hansen N.L."/>
            <person name="Heskes A.M."/>
            <person name="Hamberger B."/>
            <person name="Olsen C.E."/>
            <person name="Hallstroem B.M."/>
            <person name="Andersen-Ranberg J."/>
            <person name="Hamberger B."/>
        </authorList>
    </citation>
    <scope>NUCLEOTIDE SEQUENCE [MRNA]</scope>
    <scope>FUNCTION</scope>
    <scope>CATALYTIC ACTIVITY</scope>
    <scope>DXDD MOTIF</scope>
</reference>
<proteinExistence type="evidence at protein level"/>
<organism>
    <name type="scientific">Tripterygium wilfordii</name>
    <name type="common">Thunder God vine</name>
    <dbReference type="NCBI Taxonomy" id="458696"/>
    <lineage>
        <taxon>Eukaryota</taxon>
        <taxon>Viridiplantae</taxon>
        <taxon>Streptophyta</taxon>
        <taxon>Embryophyta</taxon>
        <taxon>Tracheophyta</taxon>
        <taxon>Spermatophyta</taxon>
        <taxon>Magnoliopsida</taxon>
        <taxon>eudicotyledons</taxon>
        <taxon>Gunneridae</taxon>
        <taxon>Pentapetalae</taxon>
        <taxon>rosids</taxon>
        <taxon>fabids</taxon>
        <taxon>Celastrales</taxon>
        <taxon>Celastraceae</taxon>
        <taxon>Tripterygium</taxon>
    </lineage>
</organism>